<gene>
    <name type="ORF">MGG_05623</name>
</gene>
<sequence>MSDGTSKSGSKSSFHFVAGLGSGVLSAALLQPIDLLKTRVQQSPHQNILRTVSEIRHTSPAGLRGLWRGTVPSALRTGFGSALYFSTLNAIRQAAVPLFAHDAAVTTSPNGGNFANNKNNSSRLVKLSNTGNLLAGGVARGFAGFVLMPLTVIKVRYESSLYSYRSIAGAAGDILRTEGPRGFFAGFGATALRDAPYAGLYVLLYEQFKRRLGGVVSSSAAPETNEDNRMGVSRAAAVNFSSGVLAAVACSVVSNPFDAVKTRIQLRPGRYRNMVVAARTMMAEEGARSFFSGLGLRMSRKALSSALAWTLYEELIMRAEVGWSLSSSRTERAM</sequence>
<reference key="1">
    <citation type="journal article" date="2005" name="Nature">
        <title>The genome sequence of the rice blast fungus Magnaporthe grisea.</title>
        <authorList>
            <person name="Dean R.A."/>
            <person name="Talbot N.J."/>
            <person name="Ebbole D.J."/>
            <person name="Farman M.L."/>
            <person name="Mitchell T.K."/>
            <person name="Orbach M.J."/>
            <person name="Thon M.R."/>
            <person name="Kulkarni R."/>
            <person name="Xu J.-R."/>
            <person name="Pan H."/>
            <person name="Read N.D."/>
            <person name="Lee Y.-H."/>
            <person name="Carbone I."/>
            <person name="Brown D."/>
            <person name="Oh Y.Y."/>
            <person name="Donofrio N."/>
            <person name="Jeong J.S."/>
            <person name="Soanes D.M."/>
            <person name="Djonovic S."/>
            <person name="Kolomiets E."/>
            <person name="Rehmeyer C."/>
            <person name="Li W."/>
            <person name="Harding M."/>
            <person name="Kim S."/>
            <person name="Lebrun M.-H."/>
            <person name="Bohnert H."/>
            <person name="Coughlan S."/>
            <person name="Butler J."/>
            <person name="Calvo S.E."/>
            <person name="Ma L.-J."/>
            <person name="Nicol R."/>
            <person name="Purcell S."/>
            <person name="Nusbaum C."/>
            <person name="Galagan J.E."/>
            <person name="Birren B.W."/>
        </authorList>
    </citation>
    <scope>NUCLEOTIDE SEQUENCE [LARGE SCALE GENOMIC DNA]</scope>
    <source>
        <strain>70-15 / ATCC MYA-4617 / FGSC 8958</strain>
    </source>
</reference>
<feature type="chain" id="PRO_0000378938" description="Mitochondrial glycine transporter">
    <location>
        <begin position="1"/>
        <end position="334"/>
    </location>
</feature>
<feature type="transmembrane region" description="Helical; Name=1" evidence="2">
    <location>
        <begin position="16"/>
        <end position="41"/>
    </location>
</feature>
<feature type="transmembrane region" description="Helical; Name=2" evidence="2">
    <location>
        <begin position="69"/>
        <end position="95"/>
    </location>
</feature>
<feature type="transmembrane region" description="Helical; Name=3" evidence="2">
    <location>
        <begin position="133"/>
        <end position="158"/>
    </location>
</feature>
<feature type="transmembrane region" description="Helical; Name=4" evidence="2">
    <location>
        <begin position="186"/>
        <end position="209"/>
    </location>
</feature>
<feature type="transmembrane region" description="Helical; Name=5" evidence="2">
    <location>
        <begin position="238"/>
        <end position="264"/>
    </location>
</feature>
<feature type="transmembrane region" description="Helical; Name=6" evidence="2">
    <location>
        <begin position="293"/>
        <end position="311"/>
    </location>
</feature>
<feature type="repeat" description="Solcar 1" evidence="2">
    <location>
        <begin position="10"/>
        <end position="94"/>
    </location>
</feature>
<feature type="repeat" description="Solcar 2" evidence="2">
    <location>
        <begin position="127"/>
        <end position="211"/>
    </location>
</feature>
<feature type="repeat" description="Solcar 3" evidence="2">
    <location>
        <begin position="234"/>
        <end position="318"/>
    </location>
</feature>
<protein>
    <recommendedName>
        <fullName evidence="2">Mitochondrial glycine transporter</fullName>
    </recommendedName>
    <alternativeName>
        <fullName evidence="2">Solute carrier family 25 member 38 homolog</fullName>
    </alternativeName>
</protein>
<comment type="function">
    <text evidence="2">Mitochondrial glycine transporter that imports glycine into the mitochondrial matrix. Plays an important role in providing glycine for the first enzymatic step in heme biosynthesis, the condensation of glycine with succinyl-CoA to produce 5-aminolevulinate (ALA) in the mitochondrial matrix.</text>
</comment>
<comment type="catalytic activity">
    <reaction evidence="1">
        <text>glycine(in) = glycine(out)</text>
        <dbReference type="Rhea" id="RHEA:70715"/>
        <dbReference type="ChEBI" id="CHEBI:57305"/>
    </reaction>
</comment>
<comment type="subcellular location">
    <subcellularLocation>
        <location evidence="2">Mitochondrion inner membrane</location>
        <topology evidence="2">Multi-pass membrane protein</topology>
    </subcellularLocation>
</comment>
<comment type="similarity">
    <text evidence="2">Belongs to the mitochondrial carrier (TC 2.A.29) family. SLC25A38 subfamily.</text>
</comment>
<name>S2538_PYRO7</name>
<evidence type="ECO:0000250" key="1">
    <source>
        <dbReference type="UniProtKB" id="Q96DW6"/>
    </source>
</evidence>
<evidence type="ECO:0000255" key="2">
    <source>
        <dbReference type="HAMAP-Rule" id="MF_03064"/>
    </source>
</evidence>
<proteinExistence type="inferred from homology"/>
<keyword id="KW-0472">Membrane</keyword>
<keyword id="KW-0496">Mitochondrion</keyword>
<keyword id="KW-0999">Mitochondrion inner membrane</keyword>
<keyword id="KW-1185">Reference proteome</keyword>
<keyword id="KW-0677">Repeat</keyword>
<keyword id="KW-0812">Transmembrane</keyword>
<keyword id="KW-1133">Transmembrane helix</keyword>
<keyword id="KW-0813">Transport</keyword>
<accession>A4RPU0</accession>
<accession>G4MNJ1</accession>
<dbReference type="EMBL" id="CM001231">
    <property type="protein sequence ID" value="EHA57897.1"/>
    <property type="molecule type" value="Genomic_DNA"/>
</dbReference>
<dbReference type="RefSeq" id="XP_003710509.1">
    <property type="nucleotide sequence ID" value="XM_003710461.1"/>
</dbReference>
<dbReference type="SMR" id="A4RPU0"/>
<dbReference type="FunCoup" id="A4RPU0">
    <property type="interactions" value="98"/>
</dbReference>
<dbReference type="STRING" id="242507.A4RPU0"/>
<dbReference type="EnsemblFungi" id="MGG_05623T0">
    <property type="protein sequence ID" value="MGG_05623T0"/>
    <property type="gene ID" value="MGG_05623"/>
</dbReference>
<dbReference type="GeneID" id="2676214"/>
<dbReference type="KEGG" id="mgr:MGG_05623"/>
<dbReference type="VEuPathDB" id="FungiDB:MGG_05623"/>
<dbReference type="eggNOG" id="KOG0766">
    <property type="taxonomic scope" value="Eukaryota"/>
</dbReference>
<dbReference type="HOGENOM" id="CLU_015166_0_3_1"/>
<dbReference type="InParanoid" id="A4RPU0"/>
<dbReference type="OMA" id="WGIYEEL"/>
<dbReference type="OrthoDB" id="1924968at2759"/>
<dbReference type="Proteomes" id="UP000009058">
    <property type="component" value="Chromosome 1"/>
</dbReference>
<dbReference type="GO" id="GO:0005743">
    <property type="term" value="C:mitochondrial inner membrane"/>
    <property type="evidence" value="ECO:0007669"/>
    <property type="project" value="UniProtKB-SubCell"/>
</dbReference>
<dbReference type="GO" id="GO:0015187">
    <property type="term" value="F:glycine transmembrane transporter activity"/>
    <property type="evidence" value="ECO:0007669"/>
    <property type="project" value="UniProtKB-UniRule"/>
</dbReference>
<dbReference type="GO" id="GO:1904983">
    <property type="term" value="P:glycine import into mitochondrion"/>
    <property type="evidence" value="ECO:0007669"/>
    <property type="project" value="UniProtKB-UniRule"/>
</dbReference>
<dbReference type="GO" id="GO:0006783">
    <property type="term" value="P:heme biosynthetic process"/>
    <property type="evidence" value="ECO:0007669"/>
    <property type="project" value="EnsemblFungi"/>
</dbReference>
<dbReference type="Gene3D" id="1.50.40.10">
    <property type="entry name" value="Mitochondrial carrier domain"/>
    <property type="match status" value="2"/>
</dbReference>
<dbReference type="HAMAP" id="MF_03064">
    <property type="entry name" value="SLC25A38"/>
    <property type="match status" value="1"/>
</dbReference>
<dbReference type="InterPro" id="IPR030847">
    <property type="entry name" value="Hem25/SLC25A38"/>
</dbReference>
<dbReference type="InterPro" id="IPR018108">
    <property type="entry name" value="Mitochondrial_sb/sol_carrier"/>
</dbReference>
<dbReference type="InterPro" id="IPR023395">
    <property type="entry name" value="Mt_carrier_dom_sf"/>
</dbReference>
<dbReference type="PANTHER" id="PTHR46181">
    <property type="entry name" value="MITOCHONDRIAL GLYCINE TRANSPORTER"/>
    <property type="match status" value="1"/>
</dbReference>
<dbReference type="PANTHER" id="PTHR46181:SF3">
    <property type="entry name" value="MITOCHONDRIAL GLYCINE TRANSPORTER"/>
    <property type="match status" value="1"/>
</dbReference>
<dbReference type="Pfam" id="PF00153">
    <property type="entry name" value="Mito_carr"/>
    <property type="match status" value="3"/>
</dbReference>
<dbReference type="SUPFAM" id="SSF103506">
    <property type="entry name" value="Mitochondrial carrier"/>
    <property type="match status" value="1"/>
</dbReference>
<dbReference type="PROSITE" id="PS50920">
    <property type="entry name" value="SOLCAR"/>
    <property type="match status" value="3"/>
</dbReference>
<organism>
    <name type="scientific">Pyricularia oryzae (strain 70-15 / ATCC MYA-4617 / FGSC 8958)</name>
    <name type="common">Rice blast fungus</name>
    <name type="synonym">Magnaporthe oryzae</name>
    <dbReference type="NCBI Taxonomy" id="242507"/>
    <lineage>
        <taxon>Eukaryota</taxon>
        <taxon>Fungi</taxon>
        <taxon>Dikarya</taxon>
        <taxon>Ascomycota</taxon>
        <taxon>Pezizomycotina</taxon>
        <taxon>Sordariomycetes</taxon>
        <taxon>Sordariomycetidae</taxon>
        <taxon>Magnaporthales</taxon>
        <taxon>Pyriculariaceae</taxon>
        <taxon>Pyricularia</taxon>
    </lineage>
</organism>